<sequence length="414" mass="45824">MENKSPSKKNKPPSCGSLVTILSLDGGGVRGIIAGVILAFLEKQLQELDGEEARLADYFDVIAGTSTGGLVTAMLTVPDETGRPHFAAKDIVPFYLEHCPKIFPQPTGVLALLPKLPKLLSGPKYSGKYLRNLLSKLLGETRLHQTLTNIVIPTFDIKKLQPTIFSSYQLLVDPSLDVKVSDICIGTSAAPTFFPPHYFSNEDSQGNKTEFNLVDGAVTANNPTLVAMTAVSKQIVKNNPDMGKLKPLGFDRFLVISIGTGSTKREEKYSAKKAAKWGIISWLYDDGSTPILDITMESSRDMIHYHSSVVFKALQSEDKYLRIDDDTLEGDVSTMDLATKSNLENLQKIGEKMLTNRVMQMNIDTGVYEPVAENITNDEQLKRYAKILSDERKLRRLRSDTMIKDSSNESQEIK</sequence>
<accession>O23179</accession>
<accession>F4JR94</accession>
<accession>O23148</accession>
<accession>Q8LBT5</accession>
<gene>
    <name type="primary">PLP1</name>
    <name type="ordered locus">At4g37070</name>
    <name type="ORF">AP22.83</name>
    <name type="ORF">C7A10.290</name>
</gene>
<reference key="1">
    <citation type="journal article" date="1998" name="Nature">
        <title>Analysis of 1.9 Mb of contiguous sequence from chromosome 4 of Arabidopsis thaliana.</title>
        <authorList>
            <person name="Bevan M."/>
            <person name="Bancroft I."/>
            <person name="Bent E."/>
            <person name="Love K."/>
            <person name="Goodman H.M."/>
            <person name="Dean C."/>
            <person name="Bergkamp R."/>
            <person name="Dirkse W."/>
            <person name="van Staveren M."/>
            <person name="Stiekema W."/>
            <person name="Drost L."/>
            <person name="Ridley P."/>
            <person name="Hudson S.-A."/>
            <person name="Patel K."/>
            <person name="Murphy G."/>
            <person name="Piffanelli P."/>
            <person name="Wedler H."/>
            <person name="Wedler E."/>
            <person name="Wambutt R."/>
            <person name="Weitzenegger T."/>
            <person name="Pohl T."/>
            <person name="Terryn N."/>
            <person name="Gielen J."/>
            <person name="Villarroel R."/>
            <person name="De Clercq R."/>
            <person name="van Montagu M."/>
            <person name="Lecharny A."/>
            <person name="Aubourg S."/>
            <person name="Gy I."/>
            <person name="Kreis M."/>
            <person name="Lao N."/>
            <person name="Kavanagh T."/>
            <person name="Hempel S."/>
            <person name="Kotter P."/>
            <person name="Entian K.-D."/>
            <person name="Rieger M."/>
            <person name="Schaefer M."/>
            <person name="Funk B."/>
            <person name="Mueller-Auer S."/>
            <person name="Silvey M."/>
            <person name="James R."/>
            <person name="Monfort A."/>
            <person name="Pons A."/>
            <person name="Puigdomenech P."/>
            <person name="Douka A."/>
            <person name="Voukelatou E."/>
            <person name="Milioni D."/>
            <person name="Hatzopoulos P."/>
            <person name="Piravandi E."/>
            <person name="Obermaier B."/>
            <person name="Hilbert H."/>
            <person name="Duesterhoeft A."/>
            <person name="Moores T."/>
            <person name="Jones J.D.G."/>
            <person name="Eneva T."/>
            <person name="Palme K."/>
            <person name="Benes V."/>
            <person name="Rechmann S."/>
            <person name="Ansorge W."/>
            <person name="Cooke R."/>
            <person name="Berger C."/>
            <person name="Delseny M."/>
            <person name="Voet M."/>
            <person name="Volckaert G."/>
            <person name="Mewes H.-W."/>
            <person name="Klosterman S."/>
            <person name="Schueller C."/>
            <person name="Chalwatzis N."/>
        </authorList>
    </citation>
    <scope>NUCLEOTIDE SEQUENCE [LARGE SCALE GENOMIC DNA]</scope>
    <source>
        <strain>cv. Columbia</strain>
    </source>
</reference>
<reference key="2">
    <citation type="journal article" date="1999" name="Nature">
        <title>Sequence and analysis of chromosome 4 of the plant Arabidopsis thaliana.</title>
        <authorList>
            <person name="Mayer K.F.X."/>
            <person name="Schueller C."/>
            <person name="Wambutt R."/>
            <person name="Murphy G."/>
            <person name="Volckaert G."/>
            <person name="Pohl T."/>
            <person name="Duesterhoeft A."/>
            <person name="Stiekema W."/>
            <person name="Entian K.-D."/>
            <person name="Terryn N."/>
            <person name="Harris B."/>
            <person name="Ansorge W."/>
            <person name="Brandt P."/>
            <person name="Grivell L.A."/>
            <person name="Rieger M."/>
            <person name="Weichselgartner M."/>
            <person name="de Simone V."/>
            <person name="Obermaier B."/>
            <person name="Mache R."/>
            <person name="Mueller M."/>
            <person name="Kreis M."/>
            <person name="Delseny M."/>
            <person name="Puigdomenech P."/>
            <person name="Watson M."/>
            <person name="Schmidtheini T."/>
            <person name="Reichert B."/>
            <person name="Portetelle D."/>
            <person name="Perez-Alonso M."/>
            <person name="Boutry M."/>
            <person name="Bancroft I."/>
            <person name="Vos P."/>
            <person name="Hoheisel J."/>
            <person name="Zimmermann W."/>
            <person name="Wedler H."/>
            <person name="Ridley P."/>
            <person name="Langham S.-A."/>
            <person name="McCullagh B."/>
            <person name="Bilham L."/>
            <person name="Robben J."/>
            <person name="van der Schueren J."/>
            <person name="Grymonprez B."/>
            <person name="Chuang Y.-J."/>
            <person name="Vandenbussche F."/>
            <person name="Braeken M."/>
            <person name="Weltjens I."/>
            <person name="Voet M."/>
            <person name="Bastiaens I."/>
            <person name="Aert R."/>
            <person name="Defoor E."/>
            <person name="Weitzenegger T."/>
            <person name="Bothe G."/>
            <person name="Ramsperger U."/>
            <person name="Hilbert H."/>
            <person name="Braun M."/>
            <person name="Holzer E."/>
            <person name="Brandt A."/>
            <person name="Peters S."/>
            <person name="van Staveren M."/>
            <person name="Dirkse W."/>
            <person name="Mooijman P."/>
            <person name="Klein Lankhorst R."/>
            <person name="Rose M."/>
            <person name="Hauf J."/>
            <person name="Koetter P."/>
            <person name="Berneiser S."/>
            <person name="Hempel S."/>
            <person name="Feldpausch M."/>
            <person name="Lamberth S."/>
            <person name="Van den Daele H."/>
            <person name="De Keyser A."/>
            <person name="Buysshaert C."/>
            <person name="Gielen J."/>
            <person name="Villarroel R."/>
            <person name="De Clercq R."/>
            <person name="van Montagu M."/>
            <person name="Rogers J."/>
            <person name="Cronin A."/>
            <person name="Quail M.A."/>
            <person name="Bray-Allen S."/>
            <person name="Clark L."/>
            <person name="Doggett J."/>
            <person name="Hall S."/>
            <person name="Kay M."/>
            <person name="Lennard N."/>
            <person name="McLay K."/>
            <person name="Mayes R."/>
            <person name="Pettett A."/>
            <person name="Rajandream M.A."/>
            <person name="Lyne M."/>
            <person name="Benes V."/>
            <person name="Rechmann S."/>
            <person name="Borkova D."/>
            <person name="Bloecker H."/>
            <person name="Scharfe M."/>
            <person name="Grimm M."/>
            <person name="Loehnert T.-H."/>
            <person name="Dose S."/>
            <person name="de Haan M."/>
            <person name="Maarse A.C."/>
            <person name="Schaefer M."/>
            <person name="Mueller-Auer S."/>
            <person name="Gabel C."/>
            <person name="Fuchs M."/>
            <person name="Fartmann B."/>
            <person name="Granderath K."/>
            <person name="Dauner D."/>
            <person name="Herzl A."/>
            <person name="Neumann S."/>
            <person name="Argiriou A."/>
            <person name="Vitale D."/>
            <person name="Liguori R."/>
            <person name="Piravandi E."/>
            <person name="Massenet O."/>
            <person name="Quigley F."/>
            <person name="Clabauld G."/>
            <person name="Muendlein A."/>
            <person name="Felber R."/>
            <person name="Schnabl S."/>
            <person name="Hiller R."/>
            <person name="Schmidt W."/>
            <person name="Lecharny A."/>
            <person name="Aubourg S."/>
            <person name="Chefdor F."/>
            <person name="Cooke R."/>
            <person name="Berger C."/>
            <person name="Monfort A."/>
            <person name="Casacuberta E."/>
            <person name="Gibbons T."/>
            <person name="Weber N."/>
            <person name="Vandenbol M."/>
            <person name="Bargues M."/>
            <person name="Terol J."/>
            <person name="Torres A."/>
            <person name="Perez-Perez A."/>
            <person name="Purnelle B."/>
            <person name="Bent E."/>
            <person name="Johnson S."/>
            <person name="Tacon D."/>
            <person name="Jesse T."/>
            <person name="Heijnen L."/>
            <person name="Schwarz S."/>
            <person name="Scholler P."/>
            <person name="Heber S."/>
            <person name="Francs P."/>
            <person name="Bielke C."/>
            <person name="Frishman D."/>
            <person name="Haase D."/>
            <person name="Lemcke K."/>
            <person name="Mewes H.-W."/>
            <person name="Stocker S."/>
            <person name="Zaccaria P."/>
            <person name="Bevan M."/>
            <person name="Wilson R.K."/>
            <person name="de la Bastide M."/>
            <person name="Habermann K."/>
            <person name="Parnell L."/>
            <person name="Dedhia N."/>
            <person name="Gnoj L."/>
            <person name="Schutz K."/>
            <person name="Huang E."/>
            <person name="Spiegel L."/>
            <person name="Sekhon M."/>
            <person name="Murray J."/>
            <person name="Sheet P."/>
            <person name="Cordes M."/>
            <person name="Abu-Threideh J."/>
            <person name="Stoneking T."/>
            <person name="Kalicki J."/>
            <person name="Graves T."/>
            <person name="Harmon G."/>
            <person name="Edwards J."/>
            <person name="Latreille P."/>
            <person name="Courtney L."/>
            <person name="Cloud J."/>
            <person name="Abbott A."/>
            <person name="Scott K."/>
            <person name="Johnson D."/>
            <person name="Minx P."/>
            <person name="Bentley D."/>
            <person name="Fulton B."/>
            <person name="Miller N."/>
            <person name="Greco T."/>
            <person name="Kemp K."/>
            <person name="Kramer J."/>
            <person name="Fulton L."/>
            <person name="Mardis E."/>
            <person name="Dante M."/>
            <person name="Pepin K."/>
            <person name="Hillier L.W."/>
            <person name="Nelson J."/>
            <person name="Spieth J."/>
            <person name="Ryan E."/>
            <person name="Andrews S."/>
            <person name="Geisel C."/>
            <person name="Layman D."/>
            <person name="Du H."/>
            <person name="Ali J."/>
            <person name="Berghoff A."/>
            <person name="Jones K."/>
            <person name="Drone K."/>
            <person name="Cotton M."/>
            <person name="Joshu C."/>
            <person name="Antonoiu B."/>
            <person name="Zidanic M."/>
            <person name="Strong C."/>
            <person name="Sun H."/>
            <person name="Lamar B."/>
            <person name="Yordan C."/>
            <person name="Ma P."/>
            <person name="Zhong J."/>
            <person name="Preston R."/>
            <person name="Vil D."/>
            <person name="Shekher M."/>
            <person name="Matero A."/>
            <person name="Shah R."/>
            <person name="Swaby I.K."/>
            <person name="O'Shaughnessy A."/>
            <person name="Rodriguez M."/>
            <person name="Hoffman J."/>
            <person name="Till S."/>
            <person name="Granat S."/>
            <person name="Shohdy N."/>
            <person name="Hasegawa A."/>
            <person name="Hameed A."/>
            <person name="Lodhi M."/>
            <person name="Johnson A."/>
            <person name="Chen E."/>
            <person name="Marra M.A."/>
            <person name="Martienssen R."/>
            <person name="McCombie W.R."/>
        </authorList>
    </citation>
    <scope>NUCLEOTIDE SEQUENCE [LARGE SCALE GENOMIC DNA]</scope>
    <source>
        <strain>cv. Columbia</strain>
    </source>
</reference>
<reference key="3">
    <citation type="journal article" date="2017" name="Plant J.">
        <title>Araport11: a complete reannotation of the Arabidopsis thaliana reference genome.</title>
        <authorList>
            <person name="Cheng C.Y."/>
            <person name="Krishnakumar V."/>
            <person name="Chan A.P."/>
            <person name="Thibaud-Nissen F."/>
            <person name="Schobel S."/>
            <person name="Town C.D."/>
        </authorList>
    </citation>
    <scope>GENOME REANNOTATION</scope>
    <source>
        <strain>cv. Columbia</strain>
    </source>
</reference>
<reference key="4">
    <citation type="submission" date="2006-12" db="EMBL/GenBank/DDBJ databases">
        <title>Arabidopsis ORF clones.</title>
        <authorList>
            <person name="Bautista V.R."/>
            <person name="Kim C.J."/>
            <person name="Chen H."/>
            <person name="Wu S.Y."/>
            <person name="De Los Reyes C."/>
            <person name="Ecker J.R."/>
        </authorList>
    </citation>
    <scope>NUCLEOTIDE SEQUENCE [LARGE SCALE MRNA] (ISOFORM 1)</scope>
    <source>
        <strain>cv. Columbia</strain>
    </source>
</reference>
<reference key="5">
    <citation type="submission" date="2002-03" db="EMBL/GenBank/DDBJ databases">
        <title>Full-length cDNA from Arabidopsis thaliana.</title>
        <authorList>
            <person name="Brover V.V."/>
            <person name="Troukhan M.E."/>
            <person name="Alexandrov N.A."/>
            <person name="Lu Y.-P."/>
            <person name="Flavell R.B."/>
            <person name="Feldmann K.A."/>
        </authorList>
    </citation>
    <scope>NUCLEOTIDE SEQUENCE [LARGE SCALE MRNA] (ISOFORM 2)</scope>
</reference>
<reference key="6">
    <citation type="journal article" date="1999" name="FEBS Lett.">
        <title>Evidence for an ancient chromosomal duplication in Arabidopsis thaliana by sequencing and analyzing a 400-kb contig at the APETALA2 locus on chromosome 4.</title>
        <authorList>
            <person name="Terryn N."/>
            <person name="Heijnen L."/>
            <person name="De Keyser A."/>
            <person name="Van Asseldonck M."/>
            <person name="De Clercq R."/>
            <person name="Verbakel H."/>
            <person name="Gielen J."/>
            <person name="Zabeau M."/>
            <person name="Villarroel R."/>
            <person name="Jesse T."/>
            <person name="Neyt P."/>
            <person name="Hogers R."/>
            <person name="Van Den Daele H."/>
            <person name="Ardiles W."/>
            <person name="Schueller C."/>
            <person name="Mayer K.F.X."/>
            <person name="Dehais P."/>
            <person name="Rombauts S."/>
            <person name="Van Montagu M."/>
            <person name="Rouze P."/>
            <person name="Vos P."/>
        </authorList>
    </citation>
    <scope>NUCLEOTIDE SEQUENCE [MRNA] OF 5-414 (ISOFORM 1)</scope>
    <source>
        <strain>cv. Columbia</strain>
    </source>
</reference>
<reference key="7">
    <citation type="journal article" date="2002" name="Plant Physiol.">
        <title>Molecular identification of cytosolic, patatin-related phospholipases A from Arabidopsis with potential functions in plant signal transduction.</title>
        <authorList>
            <person name="Holk A."/>
            <person name="Rietz S."/>
            <person name="Zahn M."/>
            <person name="Quader H."/>
            <person name="Scherer G.F."/>
        </authorList>
    </citation>
    <scope>FUNCTION</scope>
    <scope>BIOPHYSICOCHEMICAL PROPERTIES</scope>
    <scope>SUBCELLULAR LOCATION</scope>
    <scope>TISSUE SPECIFICITY</scope>
</reference>
<reference key="8">
    <citation type="journal article" date="2010" name="Mol. Plant">
        <title>Roles of Arabidopsis patatin-related phospholipases A in root development are related to auxin responses and phosphate deficiency.</title>
        <authorList>
            <person name="Rietz S."/>
            <person name="Dermendjiev G."/>
            <person name="Oppermann E."/>
            <person name="Tafesse F.G."/>
            <person name="Effendi Y."/>
            <person name="Holk A."/>
            <person name="Parker J.E."/>
            <person name="Teige M."/>
            <person name="Scherer G.F."/>
        </authorList>
    </citation>
    <scope>FUNCTION</scope>
    <scope>TISSUE SPECIFICITY</scope>
    <scope>PHOSPHORYLATION AT SER-399</scope>
    <scope>DISRUPTION PHENOTYPE</scope>
</reference>
<dbReference type="EC" id="3.1.1.-"/>
<dbReference type="EMBL" id="Z99707">
    <property type="protein sequence ID" value="CAB16787.1"/>
    <property type="molecule type" value="Genomic_DNA"/>
</dbReference>
<dbReference type="EMBL" id="AL161590">
    <property type="protein sequence ID" value="CAB80373.1"/>
    <property type="molecule type" value="Genomic_DNA"/>
</dbReference>
<dbReference type="EMBL" id="CP002687">
    <property type="protein sequence ID" value="AEE86744.1"/>
    <property type="molecule type" value="Genomic_DNA"/>
</dbReference>
<dbReference type="EMBL" id="CP002687">
    <property type="protein sequence ID" value="AEE86745.1"/>
    <property type="molecule type" value="Genomic_DNA"/>
</dbReference>
<dbReference type="EMBL" id="CP002687">
    <property type="protein sequence ID" value="AEE86746.1"/>
    <property type="molecule type" value="Genomic_DNA"/>
</dbReference>
<dbReference type="EMBL" id="BT029750">
    <property type="protein sequence ID" value="ABM06020.1"/>
    <property type="molecule type" value="mRNA"/>
</dbReference>
<dbReference type="EMBL" id="AY087005">
    <property type="protein sequence ID" value="AAM64566.1"/>
    <property type="molecule type" value="mRNA"/>
</dbReference>
<dbReference type="EMBL" id="AJ002596">
    <property type="protein sequence ID" value="CAA05628.1"/>
    <property type="molecule type" value="mRNA"/>
</dbReference>
<dbReference type="PIR" id="H85437">
    <property type="entry name" value="H85437"/>
</dbReference>
<dbReference type="PIR" id="T52294">
    <property type="entry name" value="T52294"/>
</dbReference>
<dbReference type="RefSeq" id="NP_568015.1">
    <molecule id="O23179-2"/>
    <property type="nucleotide sequence ID" value="NM_119870.2"/>
</dbReference>
<dbReference type="RefSeq" id="NP_849511.1">
    <molecule id="O23179-1"/>
    <property type="nucleotide sequence ID" value="NM_179180.3"/>
</dbReference>
<dbReference type="RefSeq" id="NP_849512.3">
    <molecule id="O23179-2"/>
    <property type="nucleotide sequence ID" value="NM_179181.3"/>
</dbReference>
<dbReference type="SMR" id="O23179"/>
<dbReference type="BioGRID" id="15142">
    <property type="interactions" value="3"/>
</dbReference>
<dbReference type="FunCoup" id="O23179">
    <property type="interactions" value="218"/>
</dbReference>
<dbReference type="STRING" id="3702.O23179"/>
<dbReference type="iPTMnet" id="O23179"/>
<dbReference type="PaxDb" id="3702-AT4G37070.2"/>
<dbReference type="ProteomicsDB" id="234674">
    <molecule id="O23179-1"/>
</dbReference>
<dbReference type="EnsemblPlants" id="AT4G37070.1">
    <molecule id="O23179-2"/>
    <property type="protein sequence ID" value="AT4G37070.1"/>
    <property type="gene ID" value="AT4G37070"/>
</dbReference>
<dbReference type="EnsemblPlants" id="AT4G37070.2">
    <molecule id="O23179-1"/>
    <property type="protein sequence ID" value="AT4G37070.2"/>
    <property type="gene ID" value="AT4G37070"/>
</dbReference>
<dbReference type="EnsemblPlants" id="AT4G37070.3">
    <molecule id="O23179-2"/>
    <property type="protein sequence ID" value="AT4G37070.3"/>
    <property type="gene ID" value="AT4G37070"/>
</dbReference>
<dbReference type="GeneID" id="829861"/>
<dbReference type="Gramene" id="AT4G37070.1">
    <molecule id="O23179-2"/>
    <property type="protein sequence ID" value="AT4G37070.1"/>
    <property type="gene ID" value="AT4G37070"/>
</dbReference>
<dbReference type="Gramene" id="AT4G37070.2">
    <molecule id="O23179-1"/>
    <property type="protein sequence ID" value="AT4G37070.2"/>
    <property type="gene ID" value="AT4G37070"/>
</dbReference>
<dbReference type="Gramene" id="AT4G37070.3">
    <molecule id="O23179-2"/>
    <property type="protein sequence ID" value="AT4G37070.3"/>
    <property type="gene ID" value="AT4G37070"/>
</dbReference>
<dbReference type="KEGG" id="ath:AT4G37070"/>
<dbReference type="Araport" id="AT4G37070"/>
<dbReference type="TAIR" id="AT4G37070">
    <property type="gene designation" value="PLP1"/>
</dbReference>
<dbReference type="eggNOG" id="KOG0513">
    <property type="taxonomic scope" value="Eukaryota"/>
</dbReference>
<dbReference type="InParanoid" id="O23179"/>
<dbReference type="OMA" id="TRGIFAP"/>
<dbReference type="OrthoDB" id="1658288at2759"/>
<dbReference type="PhylomeDB" id="O23179"/>
<dbReference type="BRENDA" id="3.1.1.23">
    <property type="organism ID" value="399"/>
</dbReference>
<dbReference type="PRO" id="PR:O23179"/>
<dbReference type="Proteomes" id="UP000006548">
    <property type="component" value="Chromosome 4"/>
</dbReference>
<dbReference type="ExpressionAtlas" id="O23179">
    <property type="expression patterns" value="baseline and differential"/>
</dbReference>
<dbReference type="GO" id="GO:0005737">
    <property type="term" value="C:cytoplasm"/>
    <property type="evidence" value="ECO:0007669"/>
    <property type="project" value="UniProtKB-SubCell"/>
</dbReference>
<dbReference type="GO" id="GO:0047372">
    <property type="term" value="F:monoacylglycerol lipase activity"/>
    <property type="evidence" value="ECO:0000314"/>
    <property type="project" value="UniProtKB"/>
</dbReference>
<dbReference type="GO" id="GO:0004620">
    <property type="term" value="F:phospholipase activity"/>
    <property type="evidence" value="ECO:0000314"/>
    <property type="project" value="TAIR"/>
</dbReference>
<dbReference type="GO" id="GO:0006952">
    <property type="term" value="P:defense response"/>
    <property type="evidence" value="ECO:0007669"/>
    <property type="project" value="UniProtKB-KW"/>
</dbReference>
<dbReference type="GO" id="GO:0010311">
    <property type="term" value="P:lateral root formation"/>
    <property type="evidence" value="ECO:0000315"/>
    <property type="project" value="TAIR"/>
</dbReference>
<dbReference type="GO" id="GO:0016042">
    <property type="term" value="P:lipid catabolic process"/>
    <property type="evidence" value="ECO:0007669"/>
    <property type="project" value="UniProtKB-KW"/>
</dbReference>
<dbReference type="CDD" id="cd07214">
    <property type="entry name" value="Pat17_isozyme_like"/>
    <property type="match status" value="1"/>
</dbReference>
<dbReference type="FunFam" id="3.40.1090.10:FF:000005">
    <property type="entry name" value="Patatin"/>
    <property type="match status" value="1"/>
</dbReference>
<dbReference type="Gene3D" id="3.40.1090.10">
    <property type="entry name" value="Cytosolic phospholipase A2 catalytic domain"/>
    <property type="match status" value="1"/>
</dbReference>
<dbReference type="InterPro" id="IPR016035">
    <property type="entry name" value="Acyl_Trfase/lysoPLipase"/>
</dbReference>
<dbReference type="InterPro" id="IPR002641">
    <property type="entry name" value="PNPLA_dom"/>
</dbReference>
<dbReference type="PANTHER" id="PTHR32176:SF89">
    <property type="entry name" value="PATATIN-LIKE PROTEIN 1-RELATED"/>
    <property type="match status" value="1"/>
</dbReference>
<dbReference type="PANTHER" id="PTHR32176">
    <property type="entry name" value="XYLOSE ISOMERASE"/>
    <property type="match status" value="1"/>
</dbReference>
<dbReference type="Pfam" id="PF01734">
    <property type="entry name" value="Patatin"/>
    <property type="match status" value="1"/>
</dbReference>
<dbReference type="SUPFAM" id="SSF52151">
    <property type="entry name" value="FabD/lysophospholipase-like"/>
    <property type="match status" value="1"/>
</dbReference>
<dbReference type="PROSITE" id="PS51635">
    <property type="entry name" value="PNPLA"/>
    <property type="match status" value="1"/>
</dbReference>
<proteinExistence type="evidence at protein level"/>
<name>PLP1_ARATH</name>
<feature type="chain" id="PRO_0000425813" description="Patatin-like protein 1">
    <location>
        <begin position="1"/>
        <end position="414"/>
    </location>
</feature>
<feature type="domain" description="PNPLA" evidence="2">
    <location>
        <begin position="22"/>
        <end position="228"/>
    </location>
</feature>
<feature type="short sequence motif" description="GXGXXG" evidence="2">
    <location>
        <begin position="26"/>
        <end position="31"/>
    </location>
</feature>
<feature type="short sequence motif" description="GXSXG" evidence="2">
    <location>
        <begin position="64"/>
        <end position="68"/>
    </location>
</feature>
<feature type="short sequence motif" description="DGA/G" evidence="2">
    <location>
        <begin position="215"/>
        <end position="217"/>
    </location>
</feature>
<feature type="active site" description="Nucleophile" evidence="2">
    <location>
        <position position="66"/>
    </location>
</feature>
<feature type="active site" description="Proton acceptor" evidence="2">
    <location>
        <position position="215"/>
    </location>
</feature>
<feature type="modified residue" description="Phosphoserine" evidence="4">
    <location>
        <position position="399"/>
    </location>
</feature>
<feature type="splice variant" id="VSP_053856" description="In isoform 2." evidence="5">
    <location>
        <begin position="384"/>
        <end position="414"/>
    </location>
</feature>
<feature type="sequence conflict" description="In Ref. 5; AAM64566." evidence="6" ref="5">
    <original>M</original>
    <variation>V</variation>
    <location>
        <position position="359"/>
    </location>
</feature>
<keyword id="KW-0025">Alternative splicing</keyword>
<keyword id="KW-0963">Cytoplasm</keyword>
<keyword id="KW-0378">Hydrolase</keyword>
<keyword id="KW-0442">Lipid degradation</keyword>
<keyword id="KW-0443">Lipid metabolism</keyword>
<keyword id="KW-0597">Phosphoprotein</keyword>
<keyword id="KW-0611">Plant defense</keyword>
<keyword id="KW-1185">Reference proteome</keyword>
<protein>
    <recommendedName>
        <fullName>Patatin-like protein 1</fullName>
        <shortName>AtPLP1</shortName>
        <ecNumber>3.1.1.-</ecNumber>
    </recommendedName>
    <alternativeName>
        <fullName>Patatin-related phospholipase A IIgamma</fullName>
        <shortName>pPLAIIg</shortName>
    </alternativeName>
    <alternativeName>
        <fullName>Phospholipase A IVA</fullName>
        <shortName>AtPLAIVA</shortName>
    </alternativeName>
</protein>
<evidence type="ECO:0000250" key="1"/>
<evidence type="ECO:0000255" key="2">
    <source>
        <dbReference type="PROSITE-ProRule" id="PRU01161"/>
    </source>
</evidence>
<evidence type="ECO:0000269" key="3">
    <source>
    </source>
</evidence>
<evidence type="ECO:0000269" key="4">
    <source>
    </source>
</evidence>
<evidence type="ECO:0000303" key="5">
    <source ref="5"/>
</evidence>
<evidence type="ECO:0000305" key="6"/>
<comment type="function">
    <text evidence="3 4">Possesses non-specific lipolytic acyl hydrolase (LAH) activity. Catalyzes the hydrolysis of the neutral lipids monogalactosyldiacylglycerol (MGDG), digalactosyldiacylglycerol (DGDG) and phosphatidylglycerol (PG), and less efficiently the polar lipids phosphatidylcholine (PC) and phosphatidylinositol (PI), but not the storage lipid triacylglycerol (TAG). May play a role in root development.</text>
</comment>
<comment type="biophysicochemical properties">
    <phDependence>
        <text evidence="3">Optimum pH is 7.0.</text>
    </phDependence>
</comment>
<comment type="subcellular location">
    <subcellularLocation>
        <location evidence="3">Cytoplasm</location>
    </subcellularLocation>
</comment>
<comment type="alternative products">
    <event type="alternative splicing"/>
    <isoform>
        <id>O23179-1</id>
        <name>1</name>
        <sequence type="displayed"/>
    </isoform>
    <isoform>
        <id>O23179-2</id>
        <name>2</name>
        <sequence type="described" ref="VSP_053856"/>
    </isoform>
</comment>
<comment type="tissue specificity">
    <text evidence="3 4">Expressed specifically in roots and root hairs.</text>
</comment>
<comment type="domain">
    <text evidence="1">The nitrogen atoms of the two glycine residues in the GGXR motif define the oxyanion hole, and stabilize the oxyanion that forms during the nucleophilic attack by the catalytic serine during substrate cleavage.</text>
</comment>
<comment type="PTM">
    <text evidence="4">Phosphorylated at Ser-399 by CPK3. Phosphorylation enhances PLP1 activity towards phosphatidylcholine.</text>
</comment>
<comment type="disruption phenotype">
    <text evidence="4">Decreased number of lateral roots.</text>
</comment>
<comment type="similarity">
    <text evidence="6">Belongs to the patatin family.</text>
</comment>
<organism>
    <name type="scientific">Arabidopsis thaliana</name>
    <name type="common">Mouse-ear cress</name>
    <dbReference type="NCBI Taxonomy" id="3702"/>
    <lineage>
        <taxon>Eukaryota</taxon>
        <taxon>Viridiplantae</taxon>
        <taxon>Streptophyta</taxon>
        <taxon>Embryophyta</taxon>
        <taxon>Tracheophyta</taxon>
        <taxon>Spermatophyta</taxon>
        <taxon>Magnoliopsida</taxon>
        <taxon>eudicotyledons</taxon>
        <taxon>Gunneridae</taxon>
        <taxon>Pentapetalae</taxon>
        <taxon>rosids</taxon>
        <taxon>malvids</taxon>
        <taxon>Brassicales</taxon>
        <taxon>Brassicaceae</taxon>
        <taxon>Camelineae</taxon>
        <taxon>Arabidopsis</taxon>
    </lineage>
</organism>